<keyword id="KW-1185">Reference proteome</keyword>
<evidence type="ECO:0000256" key="1">
    <source>
        <dbReference type="SAM" id="MobiDB-lite"/>
    </source>
</evidence>
<evidence type="ECO:0000305" key="2"/>
<gene>
    <name type="ordered locus">XCC0070</name>
</gene>
<sequence>MDKNRIEGAAKQVKGSVKEAIGRVTGDKSTELEGAAEKNIGKVQRKAGELADDVRDATKSTR</sequence>
<accession>Q8PEB1</accession>
<organism>
    <name type="scientific">Xanthomonas campestris pv. campestris (strain ATCC 33913 / DSM 3586 / NCPPB 528 / LMG 568 / P 25)</name>
    <dbReference type="NCBI Taxonomy" id="190485"/>
    <lineage>
        <taxon>Bacteria</taxon>
        <taxon>Pseudomonadati</taxon>
        <taxon>Pseudomonadota</taxon>
        <taxon>Gammaproteobacteria</taxon>
        <taxon>Lysobacterales</taxon>
        <taxon>Lysobacteraceae</taxon>
        <taxon>Xanthomonas</taxon>
    </lineage>
</organism>
<name>Y070_XANCP</name>
<reference key="1">
    <citation type="journal article" date="2002" name="Nature">
        <title>Comparison of the genomes of two Xanthomonas pathogens with differing host specificities.</title>
        <authorList>
            <person name="da Silva A.C.R."/>
            <person name="Ferro J.A."/>
            <person name="Reinach F.C."/>
            <person name="Farah C.S."/>
            <person name="Furlan L.R."/>
            <person name="Quaggio R.B."/>
            <person name="Monteiro-Vitorello C.B."/>
            <person name="Van Sluys M.A."/>
            <person name="Almeida N.F. Jr."/>
            <person name="Alves L.M.C."/>
            <person name="do Amaral A.M."/>
            <person name="Bertolini M.C."/>
            <person name="Camargo L.E.A."/>
            <person name="Camarotte G."/>
            <person name="Cannavan F."/>
            <person name="Cardozo J."/>
            <person name="Chambergo F."/>
            <person name="Ciapina L.P."/>
            <person name="Cicarelli R.M.B."/>
            <person name="Coutinho L.L."/>
            <person name="Cursino-Santos J.R."/>
            <person name="El-Dorry H."/>
            <person name="Faria J.B."/>
            <person name="Ferreira A.J.S."/>
            <person name="Ferreira R.C.C."/>
            <person name="Ferro M.I.T."/>
            <person name="Formighieri E.F."/>
            <person name="Franco M.C."/>
            <person name="Greggio C.C."/>
            <person name="Gruber A."/>
            <person name="Katsuyama A.M."/>
            <person name="Kishi L.T."/>
            <person name="Leite R.P."/>
            <person name="Lemos E.G.M."/>
            <person name="Lemos M.V.F."/>
            <person name="Locali E.C."/>
            <person name="Machado M.A."/>
            <person name="Madeira A.M.B.N."/>
            <person name="Martinez-Rossi N.M."/>
            <person name="Martins E.C."/>
            <person name="Meidanis J."/>
            <person name="Menck C.F.M."/>
            <person name="Miyaki C.Y."/>
            <person name="Moon D.H."/>
            <person name="Moreira L.M."/>
            <person name="Novo M.T.M."/>
            <person name="Okura V.K."/>
            <person name="Oliveira M.C."/>
            <person name="Oliveira V.R."/>
            <person name="Pereira H.A."/>
            <person name="Rossi A."/>
            <person name="Sena J.A.D."/>
            <person name="Silva C."/>
            <person name="de Souza R.F."/>
            <person name="Spinola L.A.F."/>
            <person name="Takita M.A."/>
            <person name="Tamura R.E."/>
            <person name="Teixeira E.C."/>
            <person name="Tezza R.I.D."/>
            <person name="Trindade dos Santos M."/>
            <person name="Truffi D."/>
            <person name="Tsai S.M."/>
            <person name="White F.F."/>
            <person name="Setubal J.C."/>
            <person name="Kitajima J.P."/>
        </authorList>
    </citation>
    <scope>NUCLEOTIDE SEQUENCE [LARGE SCALE GENOMIC DNA]</scope>
    <source>
        <strain>ATCC 33913 / DSM 3586 / NCPPB 528 / LMG 568 / P 25</strain>
    </source>
</reference>
<protein>
    <recommendedName>
        <fullName>UPF0337 protein XCC0070</fullName>
    </recommendedName>
</protein>
<proteinExistence type="inferred from homology"/>
<comment type="similarity">
    <text evidence="2">Belongs to the UPF0337 (CsbD) family.</text>
</comment>
<dbReference type="EMBL" id="AE008922">
    <property type="protein sequence ID" value="AAM39389.1"/>
    <property type="molecule type" value="Genomic_DNA"/>
</dbReference>
<dbReference type="RefSeq" id="NP_635465.1">
    <property type="nucleotide sequence ID" value="NC_003902.1"/>
</dbReference>
<dbReference type="RefSeq" id="WP_011035328.1">
    <property type="nucleotide sequence ID" value="NC_003902.1"/>
</dbReference>
<dbReference type="SMR" id="Q8PEB1"/>
<dbReference type="STRING" id="190485.XCC0070"/>
<dbReference type="EnsemblBacteria" id="AAM39389">
    <property type="protein sequence ID" value="AAM39389"/>
    <property type="gene ID" value="XCC0070"/>
</dbReference>
<dbReference type="KEGG" id="xcc:XCC0070"/>
<dbReference type="PATRIC" id="fig|190485.4.peg.77"/>
<dbReference type="eggNOG" id="COG3237">
    <property type="taxonomic scope" value="Bacteria"/>
</dbReference>
<dbReference type="HOGENOM" id="CLU_135567_3_3_6"/>
<dbReference type="OrthoDB" id="6046922at2"/>
<dbReference type="Proteomes" id="UP000001010">
    <property type="component" value="Chromosome"/>
</dbReference>
<dbReference type="Gene3D" id="1.10.1470.10">
    <property type="entry name" value="YjbJ"/>
    <property type="match status" value="1"/>
</dbReference>
<dbReference type="InterPro" id="IPR008462">
    <property type="entry name" value="CsbD"/>
</dbReference>
<dbReference type="InterPro" id="IPR050423">
    <property type="entry name" value="UPF0337_stress_rsp"/>
</dbReference>
<dbReference type="InterPro" id="IPR036629">
    <property type="entry name" value="YjbJ_sf"/>
</dbReference>
<dbReference type="PANTHER" id="PTHR34977">
    <property type="entry name" value="UPF0337 PROTEIN YJBJ"/>
    <property type="match status" value="1"/>
</dbReference>
<dbReference type="PANTHER" id="PTHR34977:SF1">
    <property type="entry name" value="UPF0337 PROTEIN YJBJ"/>
    <property type="match status" value="1"/>
</dbReference>
<dbReference type="Pfam" id="PF05532">
    <property type="entry name" value="CsbD"/>
    <property type="match status" value="1"/>
</dbReference>
<dbReference type="SUPFAM" id="SSF69047">
    <property type="entry name" value="Hypothetical protein YjbJ"/>
    <property type="match status" value="1"/>
</dbReference>
<feature type="chain" id="PRO_0000210061" description="UPF0337 protein XCC0070">
    <location>
        <begin position="1"/>
        <end position="62"/>
    </location>
</feature>
<feature type="region of interest" description="Disordered" evidence="1">
    <location>
        <begin position="32"/>
        <end position="62"/>
    </location>
</feature>